<organism>
    <name type="scientific">Mycobacterium bovis (strain ATCC BAA-935 / AF2122/97)</name>
    <dbReference type="NCBI Taxonomy" id="233413"/>
    <lineage>
        <taxon>Bacteria</taxon>
        <taxon>Bacillati</taxon>
        <taxon>Actinomycetota</taxon>
        <taxon>Actinomycetes</taxon>
        <taxon>Mycobacteriales</taxon>
        <taxon>Mycobacteriaceae</taxon>
        <taxon>Mycobacterium</taxon>
        <taxon>Mycobacterium tuberculosis complex</taxon>
    </lineage>
</organism>
<sequence>MTVFSALLLAGVLSALALAVGGAVGMRLTSRVVEQRQRVATEWSGITVSQMLQCIVTLMPLGAAVVDTHRDVVYLNERAKELGLVRDRQLDDQAWRAARQALGGEDVEFDLSPRKRSATGRSGLSVHGHARLLSEEDRRFAVVFVHDQSDYARMEAARRDFVANVSHELKTPVGAMALLAEALLASADDSETVRRFAEKVLIEANRLGDMVAELIELSRLQGAERLPNMTDVDVDTIVSEAISRHKVAADNADIEVRTDAPSNLRVLGDQTLLVTALANLVSNAIAYSPRGSLVSISRRRRGANIEIAVTDRGIGIAPEDQERVFERFFRGDKARSRATGGSGLGLAIVKHVAANHDGTIRVWSKPGTGSTFTLALPALIEAYHDDERPEQAREPELRSNRSQREEELSR</sequence>
<feature type="chain" id="PRO_0000074877" description="Sensor-like histidine kinase SenX3">
    <location>
        <begin position="1"/>
        <end position="410"/>
    </location>
</feature>
<feature type="transmembrane region" description="Helical" evidence="1">
    <location>
        <begin position="6"/>
        <end position="26"/>
    </location>
</feature>
<feature type="transmembrane region" description="Helical" evidence="1">
    <location>
        <begin position="46"/>
        <end position="66"/>
    </location>
</feature>
<feature type="domain" description="Histidine kinase" evidence="2">
    <location>
        <begin position="164"/>
        <end position="380"/>
    </location>
</feature>
<feature type="region of interest" description="Disordered" evidence="3">
    <location>
        <begin position="385"/>
        <end position="410"/>
    </location>
</feature>
<feature type="modified residue" description="Phosphohistidine; by autocatalysis" evidence="2 4">
    <location>
        <position position="167"/>
    </location>
</feature>
<feature type="mutagenesis site" description="Lack of autophosphorylation. Cannot serve as phosphodonor for RegX3." evidence="4">
    <original>H</original>
    <variation>Q</variation>
    <location>
        <position position="167"/>
    </location>
</feature>
<feature type="sequence conflict" description="In Ref. 1; CAA73954." evidence="7" ref="1">
    <original>F</original>
    <variation>S</variation>
    <location>
        <position position="109"/>
    </location>
</feature>
<proteinExistence type="evidence at protein level"/>
<evidence type="ECO:0000255" key="1"/>
<evidence type="ECO:0000255" key="2">
    <source>
        <dbReference type="PROSITE-ProRule" id="PRU00107"/>
    </source>
</evidence>
<evidence type="ECO:0000256" key="3">
    <source>
        <dbReference type="SAM" id="MobiDB-lite"/>
    </source>
</evidence>
<evidence type="ECO:0000269" key="4">
    <source>
    </source>
</evidence>
<evidence type="ECO:0000269" key="5">
    <source>
    </source>
</evidence>
<evidence type="ECO:0000303" key="6">
    <source>
    </source>
</evidence>
<evidence type="ECO:0000305" key="7"/>
<keyword id="KW-0067">ATP-binding</keyword>
<keyword id="KW-1003">Cell membrane</keyword>
<keyword id="KW-0418">Kinase</keyword>
<keyword id="KW-0472">Membrane</keyword>
<keyword id="KW-0547">Nucleotide-binding</keyword>
<keyword id="KW-0597">Phosphoprotein</keyword>
<keyword id="KW-1185">Reference proteome</keyword>
<keyword id="KW-0808">Transferase</keyword>
<keyword id="KW-0812">Transmembrane</keyword>
<keyword id="KW-1133">Transmembrane helix</keyword>
<keyword id="KW-0902">Two-component regulatory system</keyword>
<name>SENX3_MYCBO</name>
<protein>
    <recommendedName>
        <fullName evidence="7">Sensor-like histidine kinase SenX3</fullName>
        <ecNumber evidence="4">2.7.13.3</ecNumber>
    </recommendedName>
</protein>
<gene>
    <name evidence="6" type="primary">senX3</name>
    <name type="ordered locus">BQ2027_MB0500</name>
</gene>
<comment type="function">
    <text evidence="4">Member of the two-component regulatory system SenX3/RegX3 (PubMed:11101667). Autophosphorylates, and then transfers the phosphate group to RegX3 (PubMed:11101667).</text>
</comment>
<comment type="catalytic activity">
    <reaction evidence="4">
        <text>ATP + protein L-histidine = ADP + protein N-phospho-L-histidine.</text>
        <dbReference type="EC" id="2.7.13.3"/>
    </reaction>
</comment>
<comment type="subcellular location">
    <subcellularLocation>
        <location evidence="7">Cell membrane</location>
        <topology evidence="1">Multi-pass membrane protein</topology>
    </subcellularLocation>
</comment>
<comment type="induction">
    <text evidence="4 5">Positively regulated by RegX3 (PubMed:11101667). Part of the senX3-regX3 operon (PubMed:9426136). The two genes are separated by a rather long intercistronic region composed of a class of duplicated sequences named mycobacterial interspersed repetitive units (MIRUs) (PubMed:9426136).</text>
</comment>
<comment type="PTM">
    <text evidence="4">Autophosphorylated.</text>
</comment>
<accession>P0A601</accession>
<accession>A0A1R3XW13</accession>
<accession>O07129</accession>
<accession>Q11155</accession>
<accession>X2BF71</accession>
<dbReference type="EC" id="2.7.13.3" evidence="4"/>
<dbReference type="EMBL" id="Y13627">
    <property type="protein sequence ID" value="CAA73954.1"/>
    <property type="molecule type" value="Genomic_DNA"/>
</dbReference>
<dbReference type="EMBL" id="LT708304">
    <property type="protein sequence ID" value="SIT99095.1"/>
    <property type="molecule type" value="Genomic_DNA"/>
</dbReference>
<dbReference type="RefSeq" id="NP_854163.1">
    <property type="nucleotide sequence ID" value="NC_002945.3"/>
</dbReference>
<dbReference type="RefSeq" id="WP_003402390.1">
    <property type="nucleotide sequence ID" value="NC_002945.4"/>
</dbReference>
<dbReference type="SMR" id="P0A601"/>
<dbReference type="iPTMnet" id="P0A601"/>
<dbReference type="GeneID" id="45424451"/>
<dbReference type="PATRIC" id="fig|233413.5.peg.544"/>
<dbReference type="BRENDA" id="2.7.13.3">
    <property type="organism ID" value="3494"/>
</dbReference>
<dbReference type="Proteomes" id="UP000001419">
    <property type="component" value="Chromosome"/>
</dbReference>
<dbReference type="GO" id="GO:0005886">
    <property type="term" value="C:plasma membrane"/>
    <property type="evidence" value="ECO:0007669"/>
    <property type="project" value="UniProtKB-SubCell"/>
</dbReference>
<dbReference type="GO" id="GO:0005524">
    <property type="term" value="F:ATP binding"/>
    <property type="evidence" value="ECO:0007669"/>
    <property type="project" value="UniProtKB-KW"/>
</dbReference>
<dbReference type="GO" id="GO:0004721">
    <property type="term" value="F:phosphoprotein phosphatase activity"/>
    <property type="evidence" value="ECO:0007669"/>
    <property type="project" value="TreeGrafter"/>
</dbReference>
<dbReference type="GO" id="GO:0000155">
    <property type="term" value="F:phosphorelay sensor kinase activity"/>
    <property type="evidence" value="ECO:0007669"/>
    <property type="project" value="InterPro"/>
</dbReference>
<dbReference type="GO" id="GO:0016036">
    <property type="term" value="P:cellular response to phosphate starvation"/>
    <property type="evidence" value="ECO:0007669"/>
    <property type="project" value="TreeGrafter"/>
</dbReference>
<dbReference type="CDD" id="cd00082">
    <property type="entry name" value="HisKA"/>
    <property type="match status" value="1"/>
</dbReference>
<dbReference type="FunFam" id="1.10.287.130:FF:000008">
    <property type="entry name" value="Two-component sensor histidine kinase"/>
    <property type="match status" value="1"/>
</dbReference>
<dbReference type="FunFam" id="3.30.565.10:FF:000045">
    <property type="entry name" value="Two-component sensor histidine kinase"/>
    <property type="match status" value="1"/>
</dbReference>
<dbReference type="Gene3D" id="1.10.287.130">
    <property type="match status" value="1"/>
</dbReference>
<dbReference type="Gene3D" id="3.30.565.10">
    <property type="entry name" value="Histidine kinase-like ATPase, C-terminal domain"/>
    <property type="match status" value="1"/>
</dbReference>
<dbReference type="InterPro" id="IPR050351">
    <property type="entry name" value="2-comp_sensor_kinase"/>
</dbReference>
<dbReference type="InterPro" id="IPR036890">
    <property type="entry name" value="HATPase_C_sf"/>
</dbReference>
<dbReference type="InterPro" id="IPR005467">
    <property type="entry name" value="His_kinase_dom"/>
</dbReference>
<dbReference type="InterPro" id="IPR003661">
    <property type="entry name" value="HisK_dim/P_dom"/>
</dbReference>
<dbReference type="InterPro" id="IPR036097">
    <property type="entry name" value="HisK_dim/P_sf"/>
</dbReference>
<dbReference type="InterPro" id="IPR004358">
    <property type="entry name" value="Sig_transdc_His_kin-like_C"/>
</dbReference>
<dbReference type="PANTHER" id="PTHR45453">
    <property type="entry name" value="PHOSPHATE REGULON SENSOR PROTEIN PHOR"/>
    <property type="match status" value="1"/>
</dbReference>
<dbReference type="PANTHER" id="PTHR45453:SF1">
    <property type="entry name" value="PHOSPHATE REGULON SENSOR PROTEIN PHOR"/>
    <property type="match status" value="1"/>
</dbReference>
<dbReference type="Pfam" id="PF02518">
    <property type="entry name" value="HATPase_c"/>
    <property type="match status" value="1"/>
</dbReference>
<dbReference type="Pfam" id="PF00512">
    <property type="entry name" value="HisKA"/>
    <property type="match status" value="1"/>
</dbReference>
<dbReference type="PRINTS" id="PR00344">
    <property type="entry name" value="BCTRLSENSOR"/>
</dbReference>
<dbReference type="SMART" id="SM00387">
    <property type="entry name" value="HATPase_c"/>
    <property type="match status" value="1"/>
</dbReference>
<dbReference type="SMART" id="SM00388">
    <property type="entry name" value="HisKA"/>
    <property type="match status" value="1"/>
</dbReference>
<dbReference type="SUPFAM" id="SSF55874">
    <property type="entry name" value="ATPase domain of HSP90 chaperone/DNA topoisomerase II/histidine kinase"/>
    <property type="match status" value="1"/>
</dbReference>
<dbReference type="SUPFAM" id="SSF47384">
    <property type="entry name" value="Homodimeric domain of signal transducing histidine kinase"/>
    <property type="match status" value="1"/>
</dbReference>
<dbReference type="PROSITE" id="PS50109">
    <property type="entry name" value="HIS_KIN"/>
    <property type="match status" value="1"/>
</dbReference>
<reference key="1">
    <citation type="journal article" date="1997" name="Mol. Microbiol.">
        <title>Identification of novel intergenic repetitive units in a mycobacterial two-component system operon.</title>
        <authorList>
            <person name="Supply P."/>
            <person name="Magdalena J."/>
            <person name="Himpens S."/>
            <person name="Locht C."/>
        </authorList>
    </citation>
    <scope>NUCLEOTIDE SEQUENCE [GENOMIC DNA]</scope>
    <scope>OPERON</scope>
    <source>
        <strain>BCG / Pasteur</strain>
    </source>
</reference>
<reference key="2">
    <citation type="journal article" date="2003" name="Proc. Natl. Acad. Sci. U.S.A.">
        <title>The complete genome sequence of Mycobacterium bovis.</title>
        <authorList>
            <person name="Garnier T."/>
            <person name="Eiglmeier K."/>
            <person name="Camus J.-C."/>
            <person name="Medina N."/>
            <person name="Mansoor H."/>
            <person name="Pryor M."/>
            <person name="Duthoy S."/>
            <person name="Grondin S."/>
            <person name="Lacroix C."/>
            <person name="Monsempe C."/>
            <person name="Simon S."/>
            <person name="Harris B."/>
            <person name="Atkin R."/>
            <person name="Doggett J."/>
            <person name="Mayes R."/>
            <person name="Keating L."/>
            <person name="Wheeler P.R."/>
            <person name="Parkhill J."/>
            <person name="Barrell B.G."/>
            <person name="Cole S.T."/>
            <person name="Gordon S.V."/>
            <person name="Hewinson R.G."/>
        </authorList>
    </citation>
    <scope>NUCLEOTIDE SEQUENCE [LARGE SCALE GENOMIC DNA]</scope>
    <source>
        <strain>ATCC BAA-935 / AF2122/97</strain>
    </source>
</reference>
<reference key="3">
    <citation type="journal article" date="2017" name="Genome Announc.">
        <title>Updated reference genome sequence and annotation of Mycobacterium bovis AF2122/97.</title>
        <authorList>
            <person name="Malone K.M."/>
            <person name="Farrell D."/>
            <person name="Stuber T.P."/>
            <person name="Schubert O.T."/>
            <person name="Aebersold R."/>
            <person name="Robbe-Austerman S."/>
            <person name="Gordon S.V."/>
        </authorList>
    </citation>
    <scope>NUCLEOTIDE SEQUENCE [LARGE SCALE GENOMIC DNA]</scope>
    <scope>GENOME REANNOTATION</scope>
    <source>
        <strain>ATCC BAA-935 / AF2122/97</strain>
    </source>
</reference>
<reference key="4">
    <citation type="journal article" date="2000" name="Microbiology">
        <title>Molecular characterization of the mycobacterial SenX3-RegX3 two-component system: evidence for autoregulation.</title>
        <authorList>
            <person name="Himpens S."/>
            <person name="Locht C."/>
            <person name="Supply P."/>
        </authorList>
    </citation>
    <scope>FUNCTION</scope>
    <scope>CATALYTIC ACTIVITY</scope>
    <scope>INDUCTION</scope>
    <scope>PHOSPHORYLATION AT HIS-167</scope>
    <scope>MUTAGENESIS OF HIS-167</scope>
    <source>
        <strain>BCG</strain>
    </source>
</reference>